<reference key="1">
    <citation type="submission" date="2007-06" db="EMBL/GenBank/DDBJ databases">
        <title>Complete sequence of Methanococcus aeolicus Nankai-3.</title>
        <authorList>
            <consortium name="US DOE Joint Genome Institute"/>
            <person name="Copeland A."/>
            <person name="Lucas S."/>
            <person name="Lapidus A."/>
            <person name="Barry K."/>
            <person name="Glavina del Rio T."/>
            <person name="Dalin E."/>
            <person name="Tice H."/>
            <person name="Pitluck S."/>
            <person name="Chain P."/>
            <person name="Malfatti S."/>
            <person name="Shin M."/>
            <person name="Vergez L."/>
            <person name="Schmutz J."/>
            <person name="Larimer F."/>
            <person name="Land M."/>
            <person name="Hauser L."/>
            <person name="Kyrpides N."/>
            <person name="Lykidis A."/>
            <person name="Sieprawska-Lupa M."/>
            <person name="Whitman W.B."/>
            <person name="Richardson P."/>
        </authorList>
    </citation>
    <scope>NUCLEOTIDE SEQUENCE [LARGE SCALE GENOMIC DNA]</scope>
    <source>
        <strain>ATCC BAA-1280 / DSM 17508 / OCM 812 / Nankai-3</strain>
    </source>
</reference>
<accession>A6UVQ1</accession>
<dbReference type="EMBL" id="CP000743">
    <property type="protein sequence ID" value="ABR56573.1"/>
    <property type="molecule type" value="Genomic_DNA"/>
</dbReference>
<dbReference type="RefSeq" id="WP_011973705.1">
    <property type="nucleotide sequence ID" value="NC_009635.1"/>
</dbReference>
<dbReference type="SMR" id="A6UVQ1"/>
<dbReference type="STRING" id="419665.Maeo_0995"/>
<dbReference type="GeneID" id="5326679"/>
<dbReference type="KEGG" id="mae:Maeo_0995"/>
<dbReference type="eggNOG" id="arCOG04900">
    <property type="taxonomic scope" value="Archaea"/>
</dbReference>
<dbReference type="HOGENOM" id="CLU_533841_0_0_2"/>
<dbReference type="OrthoDB" id="140355at2157"/>
<dbReference type="Proteomes" id="UP000001106">
    <property type="component" value="Chromosome"/>
</dbReference>
<dbReference type="HAMAP" id="MF_01089">
    <property type="entry name" value="UPF0288"/>
    <property type="match status" value="1"/>
</dbReference>
<dbReference type="InterPro" id="IPR016466">
    <property type="entry name" value="Methan_mark_3"/>
</dbReference>
<dbReference type="NCBIfam" id="TIGR03268">
    <property type="entry name" value="methan_mark_3"/>
    <property type="match status" value="1"/>
</dbReference>
<dbReference type="PIRSF" id="PIRSF005852">
    <property type="entry name" value="UCP005852"/>
    <property type="match status" value="1"/>
</dbReference>
<organism>
    <name type="scientific">Methanococcus aeolicus (strain ATCC BAA-1280 / DSM 17508 / OCM 812 / Nankai-3)</name>
    <dbReference type="NCBI Taxonomy" id="419665"/>
    <lineage>
        <taxon>Archaea</taxon>
        <taxon>Methanobacteriati</taxon>
        <taxon>Methanobacteriota</taxon>
        <taxon>Methanomada group</taxon>
        <taxon>Methanococci</taxon>
        <taxon>Methanococcales</taxon>
        <taxon>Methanococcaceae</taxon>
        <taxon>Methanococcus</taxon>
    </lineage>
</organism>
<name>Y995_META3</name>
<gene>
    <name type="ordered locus">Maeo_0995</name>
</gene>
<evidence type="ECO:0000255" key="1">
    <source>
        <dbReference type="HAMAP-Rule" id="MF_01089"/>
    </source>
</evidence>
<feature type="chain" id="PRO_1000149882" description="UPF0288 protein Maeo_0995">
    <location>
        <begin position="1"/>
        <end position="501"/>
    </location>
</feature>
<proteinExistence type="inferred from homology"/>
<comment type="similarity">
    <text evidence="1">Belongs to the UPF0288 family.</text>
</comment>
<protein>
    <recommendedName>
        <fullName evidence="1">UPF0288 protein Maeo_0995</fullName>
    </recommendedName>
</protein>
<sequence>MAKVLVNGNIKSGDVLKEVIENEPHLENSNIAIIRGIKKETEKESKKYKITTTKGVMIVGITENNESVDFWNKNYSLLEGKNLRWKSPLDVAFGAITIDLDVVKEPYKFKKYDVALSISGFDKTEGHLIFIKKDATEAQGLRNPKIGELIGGKRILPKLTTEDKIISIEPIMESREKIDYLLTTDLNTKLEDDWKIFTYCEAELEGPSKAVEHVLAIMESGYIEASEHTNTYIADCRLQTLKMDEENLKDRDRGTITVRNIGEGIGKVFVYKENRTSSLSHTAVGKITKGMELLDFSEGGIITTISTPERLTVIGKTNEEAKKLFEKYGINHTMEGAPNDIIIEQTPKYTMDILKSKEVITKGIPENKIIKIEIYDEKAPVSAWYFRKMTGLTTQKVGSLPINFKHGDMVMFDKNEEYAKGLLPENIPNEETGCPEGVIAITNMAKRYKGYIGIRLSSNDKFGPTGESFEGTNIVGKVVENGEIIKKLRAKDRVYFLEVNQ</sequence>